<sequence length="108" mass="12161">MSTHDILHRLSETLASRRHADPEKSYTAKLFSEGPDSILKKIGEECAELIMAAKDGKRLNIVWESTDVIYHVLVLLAFYGLSIEDVSQEMRRREGISGIDEKASRGTK</sequence>
<proteinExistence type="inferred from homology"/>
<name>HIS2_DECAR</name>
<feature type="chain" id="PRO_0000230174" description="Phosphoribosyl-ATP pyrophosphatase">
    <location>
        <begin position="1"/>
        <end position="108"/>
    </location>
</feature>
<reference key="1">
    <citation type="journal article" date="2009" name="BMC Genomics">
        <title>Metabolic analysis of the soil microbe Dechloromonas aromatica str. RCB: indications of a surprisingly complex life-style and cryptic anaerobic pathways for aromatic degradation.</title>
        <authorList>
            <person name="Salinero K.K."/>
            <person name="Keller K."/>
            <person name="Feil W.S."/>
            <person name="Feil H."/>
            <person name="Trong S."/>
            <person name="Di Bartolo G."/>
            <person name="Lapidus A."/>
        </authorList>
    </citation>
    <scope>NUCLEOTIDE SEQUENCE [LARGE SCALE GENOMIC DNA]</scope>
    <source>
        <strain>RCB</strain>
    </source>
</reference>
<dbReference type="EC" id="3.6.1.31" evidence="1"/>
<dbReference type="EMBL" id="CP000089">
    <property type="protein sequence ID" value="AAZ48106.1"/>
    <property type="molecule type" value="Genomic_DNA"/>
</dbReference>
<dbReference type="SMR" id="Q47AM5"/>
<dbReference type="STRING" id="159087.Daro_3377"/>
<dbReference type="KEGG" id="dar:Daro_3377"/>
<dbReference type="eggNOG" id="COG0140">
    <property type="taxonomic scope" value="Bacteria"/>
</dbReference>
<dbReference type="HOGENOM" id="CLU_123337_1_2_4"/>
<dbReference type="OrthoDB" id="9814738at2"/>
<dbReference type="UniPathway" id="UPA00031">
    <property type="reaction ID" value="UER00007"/>
</dbReference>
<dbReference type="GO" id="GO:0005737">
    <property type="term" value="C:cytoplasm"/>
    <property type="evidence" value="ECO:0007669"/>
    <property type="project" value="UniProtKB-SubCell"/>
</dbReference>
<dbReference type="GO" id="GO:0005524">
    <property type="term" value="F:ATP binding"/>
    <property type="evidence" value="ECO:0007669"/>
    <property type="project" value="UniProtKB-KW"/>
</dbReference>
<dbReference type="GO" id="GO:0004636">
    <property type="term" value="F:phosphoribosyl-ATP diphosphatase activity"/>
    <property type="evidence" value="ECO:0007669"/>
    <property type="project" value="UniProtKB-UniRule"/>
</dbReference>
<dbReference type="GO" id="GO:0000105">
    <property type="term" value="P:L-histidine biosynthetic process"/>
    <property type="evidence" value="ECO:0007669"/>
    <property type="project" value="UniProtKB-UniRule"/>
</dbReference>
<dbReference type="CDD" id="cd11534">
    <property type="entry name" value="NTP-PPase_HisIE_like"/>
    <property type="match status" value="1"/>
</dbReference>
<dbReference type="FunFam" id="1.10.287.1080:FF:000002">
    <property type="entry name" value="Histidine biosynthesis bifunctional protein HisIE"/>
    <property type="match status" value="1"/>
</dbReference>
<dbReference type="Gene3D" id="1.10.287.1080">
    <property type="entry name" value="MazG-like"/>
    <property type="match status" value="1"/>
</dbReference>
<dbReference type="HAMAP" id="MF_01020">
    <property type="entry name" value="HisE"/>
    <property type="match status" value="1"/>
</dbReference>
<dbReference type="InterPro" id="IPR008179">
    <property type="entry name" value="HisE"/>
</dbReference>
<dbReference type="InterPro" id="IPR021130">
    <property type="entry name" value="PRib-ATP_PPHydrolase-like"/>
</dbReference>
<dbReference type="NCBIfam" id="TIGR03188">
    <property type="entry name" value="histidine_hisI"/>
    <property type="match status" value="1"/>
</dbReference>
<dbReference type="NCBIfam" id="NF001611">
    <property type="entry name" value="PRK00400.1-3"/>
    <property type="match status" value="1"/>
</dbReference>
<dbReference type="NCBIfam" id="NF001613">
    <property type="entry name" value="PRK00400.1-5"/>
    <property type="match status" value="1"/>
</dbReference>
<dbReference type="PANTHER" id="PTHR42945">
    <property type="entry name" value="HISTIDINE BIOSYNTHESIS BIFUNCTIONAL PROTEIN"/>
    <property type="match status" value="1"/>
</dbReference>
<dbReference type="PANTHER" id="PTHR42945:SF9">
    <property type="entry name" value="HISTIDINE BIOSYNTHESIS BIFUNCTIONAL PROTEIN HISIE"/>
    <property type="match status" value="1"/>
</dbReference>
<dbReference type="Pfam" id="PF01503">
    <property type="entry name" value="PRA-PH"/>
    <property type="match status" value="1"/>
</dbReference>
<dbReference type="SUPFAM" id="SSF101386">
    <property type="entry name" value="all-alpha NTP pyrophosphatases"/>
    <property type="match status" value="1"/>
</dbReference>
<evidence type="ECO:0000255" key="1">
    <source>
        <dbReference type="HAMAP-Rule" id="MF_01020"/>
    </source>
</evidence>
<protein>
    <recommendedName>
        <fullName evidence="1">Phosphoribosyl-ATP pyrophosphatase</fullName>
        <shortName evidence="1">PRA-PH</shortName>
        <ecNumber evidence="1">3.6.1.31</ecNumber>
    </recommendedName>
</protein>
<organism>
    <name type="scientific">Dechloromonas aromatica (strain RCB)</name>
    <dbReference type="NCBI Taxonomy" id="159087"/>
    <lineage>
        <taxon>Bacteria</taxon>
        <taxon>Pseudomonadati</taxon>
        <taxon>Pseudomonadota</taxon>
        <taxon>Betaproteobacteria</taxon>
        <taxon>Rhodocyclales</taxon>
        <taxon>Azonexaceae</taxon>
        <taxon>Dechloromonas</taxon>
    </lineage>
</organism>
<gene>
    <name evidence="1" type="primary">hisE</name>
    <name type="ordered locus">Daro_3377</name>
</gene>
<keyword id="KW-0028">Amino-acid biosynthesis</keyword>
<keyword id="KW-0067">ATP-binding</keyword>
<keyword id="KW-0963">Cytoplasm</keyword>
<keyword id="KW-0368">Histidine biosynthesis</keyword>
<keyword id="KW-0378">Hydrolase</keyword>
<keyword id="KW-0547">Nucleotide-binding</keyword>
<comment type="catalytic activity">
    <reaction evidence="1">
        <text>1-(5-phospho-beta-D-ribosyl)-ATP + H2O = 1-(5-phospho-beta-D-ribosyl)-5'-AMP + diphosphate + H(+)</text>
        <dbReference type="Rhea" id="RHEA:22828"/>
        <dbReference type="ChEBI" id="CHEBI:15377"/>
        <dbReference type="ChEBI" id="CHEBI:15378"/>
        <dbReference type="ChEBI" id="CHEBI:33019"/>
        <dbReference type="ChEBI" id="CHEBI:59457"/>
        <dbReference type="ChEBI" id="CHEBI:73183"/>
        <dbReference type="EC" id="3.6.1.31"/>
    </reaction>
</comment>
<comment type="pathway">
    <text evidence="1">Amino-acid biosynthesis; L-histidine biosynthesis; L-histidine from 5-phospho-alpha-D-ribose 1-diphosphate: step 2/9.</text>
</comment>
<comment type="subcellular location">
    <subcellularLocation>
        <location evidence="1">Cytoplasm</location>
    </subcellularLocation>
</comment>
<comment type="similarity">
    <text evidence="1">Belongs to the PRA-PH family.</text>
</comment>
<accession>Q47AM5</accession>